<gene>
    <name evidence="1" type="primary">rps4</name>
    <name type="ordered locus">CENSYa_1599</name>
</gene>
<accession>A0RY02</accession>
<name>RS4_CENSY</name>
<dbReference type="EMBL" id="DP000238">
    <property type="protein sequence ID" value="ABK78219.1"/>
    <property type="molecule type" value="Genomic_DNA"/>
</dbReference>
<dbReference type="SMR" id="A0RY02"/>
<dbReference type="STRING" id="414004.CENSYa_1599"/>
<dbReference type="EnsemblBacteria" id="ABK78219">
    <property type="protein sequence ID" value="ABK78219"/>
    <property type="gene ID" value="CENSYa_1599"/>
</dbReference>
<dbReference type="KEGG" id="csy:CENSYa_1599"/>
<dbReference type="PATRIC" id="fig|414004.10.peg.1462"/>
<dbReference type="HOGENOM" id="CLU_089738_1_1_2"/>
<dbReference type="Proteomes" id="UP000000758">
    <property type="component" value="Chromosome"/>
</dbReference>
<dbReference type="GO" id="GO:0015935">
    <property type="term" value="C:small ribosomal subunit"/>
    <property type="evidence" value="ECO:0007669"/>
    <property type="project" value="InterPro"/>
</dbReference>
<dbReference type="GO" id="GO:0019843">
    <property type="term" value="F:rRNA binding"/>
    <property type="evidence" value="ECO:0007669"/>
    <property type="project" value="UniProtKB-UniRule"/>
</dbReference>
<dbReference type="GO" id="GO:0003735">
    <property type="term" value="F:structural constituent of ribosome"/>
    <property type="evidence" value="ECO:0007669"/>
    <property type="project" value="InterPro"/>
</dbReference>
<dbReference type="GO" id="GO:0042274">
    <property type="term" value="P:ribosomal small subunit biogenesis"/>
    <property type="evidence" value="ECO:0007669"/>
    <property type="project" value="TreeGrafter"/>
</dbReference>
<dbReference type="GO" id="GO:0006412">
    <property type="term" value="P:translation"/>
    <property type="evidence" value="ECO:0007669"/>
    <property type="project" value="UniProtKB-UniRule"/>
</dbReference>
<dbReference type="CDD" id="cd00165">
    <property type="entry name" value="S4"/>
    <property type="match status" value="1"/>
</dbReference>
<dbReference type="Gene3D" id="3.10.290.10">
    <property type="entry name" value="RNA-binding S4 domain"/>
    <property type="match status" value="1"/>
</dbReference>
<dbReference type="HAMAP" id="MF_01306_A">
    <property type="entry name" value="Ribosomal_uS4_A"/>
    <property type="match status" value="1"/>
</dbReference>
<dbReference type="InterPro" id="IPR022801">
    <property type="entry name" value="Ribosomal_uS4"/>
</dbReference>
<dbReference type="InterPro" id="IPR022802">
    <property type="entry name" value="Ribosomal_uS4_arc"/>
</dbReference>
<dbReference type="InterPro" id="IPR005710">
    <property type="entry name" value="Ribosomal_uS4_euk/arc"/>
</dbReference>
<dbReference type="InterPro" id="IPR001912">
    <property type="entry name" value="Ribosomal_uS4_N"/>
</dbReference>
<dbReference type="InterPro" id="IPR002942">
    <property type="entry name" value="S4_RNA-bd"/>
</dbReference>
<dbReference type="InterPro" id="IPR036986">
    <property type="entry name" value="S4_RNA-bd_sf"/>
</dbReference>
<dbReference type="NCBIfam" id="NF003139">
    <property type="entry name" value="PRK04051.1"/>
    <property type="match status" value="1"/>
</dbReference>
<dbReference type="NCBIfam" id="TIGR01018">
    <property type="entry name" value="uS4_arch"/>
    <property type="match status" value="1"/>
</dbReference>
<dbReference type="PANTHER" id="PTHR11831">
    <property type="entry name" value="30S 40S RIBOSOMAL PROTEIN"/>
    <property type="match status" value="1"/>
</dbReference>
<dbReference type="PANTHER" id="PTHR11831:SF5">
    <property type="entry name" value="40S RIBOSOMAL PROTEIN S9"/>
    <property type="match status" value="1"/>
</dbReference>
<dbReference type="Pfam" id="PF01479">
    <property type="entry name" value="S4"/>
    <property type="match status" value="1"/>
</dbReference>
<dbReference type="SMART" id="SM01390">
    <property type="entry name" value="Ribosomal_S4"/>
    <property type="match status" value="1"/>
</dbReference>
<dbReference type="SMART" id="SM00363">
    <property type="entry name" value="S4"/>
    <property type="match status" value="1"/>
</dbReference>
<dbReference type="SUPFAM" id="SSF55174">
    <property type="entry name" value="Alpha-L RNA-binding motif"/>
    <property type="match status" value="1"/>
</dbReference>
<dbReference type="PROSITE" id="PS50889">
    <property type="entry name" value="S4"/>
    <property type="match status" value="1"/>
</dbReference>
<reference key="1">
    <citation type="journal article" date="2006" name="Proc. Natl. Acad. Sci. U.S.A.">
        <title>Genomic analysis of the uncultivated marine crenarchaeote Cenarchaeum symbiosum.</title>
        <authorList>
            <person name="Hallam S.J."/>
            <person name="Konstantinidis K.T."/>
            <person name="Putnam N."/>
            <person name="Schleper C."/>
            <person name="Watanabe Y."/>
            <person name="Sugahara J."/>
            <person name="Preston C."/>
            <person name="de la Torre J."/>
            <person name="Richardson P.M."/>
            <person name="DeLong E.F."/>
        </authorList>
    </citation>
    <scope>NUCLEOTIDE SEQUENCE [LARGE SCALE GENOMIC DNA]</scope>
    <source>
        <strain>A</strain>
    </source>
</reference>
<comment type="function">
    <text evidence="1">One of the primary rRNA binding proteins, it binds directly to 16S rRNA where it nucleates assembly of the body of the 30S subunit.</text>
</comment>
<comment type="function">
    <text evidence="1">With S5 and S12 plays an important role in translational accuracy.</text>
</comment>
<comment type="subunit">
    <text evidence="1">Part of the 30S ribosomal subunit. Contacts protein S5. The interaction surface between S4 and S5 is involved in control of translational fidelity.</text>
</comment>
<comment type="similarity">
    <text evidence="1">Belongs to the universal ribosomal protein uS4 family.</text>
</comment>
<organism>
    <name type="scientific">Cenarchaeum symbiosum (strain A)</name>
    <dbReference type="NCBI Taxonomy" id="414004"/>
    <lineage>
        <taxon>Archaea</taxon>
        <taxon>Nitrososphaerota</taxon>
        <taxon>Candidatus Cenarchaeales</taxon>
        <taxon>Candidatus Cenarchaeaceae</taxon>
        <taxon>Candidatus Cenarchaeum</taxon>
    </lineage>
</organism>
<keyword id="KW-1185">Reference proteome</keyword>
<keyword id="KW-0687">Ribonucleoprotein</keyword>
<keyword id="KW-0689">Ribosomal protein</keyword>
<keyword id="KW-0694">RNA-binding</keyword>
<keyword id="KW-0699">rRNA-binding</keyword>
<protein>
    <recommendedName>
        <fullName evidence="1">Small ribosomal subunit protein uS4</fullName>
    </recommendedName>
    <alternativeName>
        <fullName evidence="3">30S ribosomal protein S4</fullName>
    </alternativeName>
</protein>
<evidence type="ECO:0000255" key="1">
    <source>
        <dbReference type="HAMAP-Rule" id="MF_01306"/>
    </source>
</evidence>
<evidence type="ECO:0000256" key="2">
    <source>
        <dbReference type="SAM" id="MobiDB-lite"/>
    </source>
</evidence>
<evidence type="ECO:0000305" key="3"/>
<feature type="chain" id="PRO_0000293401" description="Small ribosomal subunit protein uS4">
    <location>
        <begin position="1"/>
        <end position="205"/>
    </location>
</feature>
<feature type="domain" description="S4 RNA-binding" evidence="1">
    <location>
        <begin position="103"/>
        <end position="173"/>
    </location>
</feature>
<feature type="region of interest" description="Disordered" evidence="2">
    <location>
        <begin position="174"/>
        <end position="205"/>
    </location>
</feature>
<feature type="compositionally biased region" description="Low complexity" evidence="2">
    <location>
        <begin position="179"/>
        <end position="205"/>
    </location>
</feature>
<proteinExistence type="inferred from homology"/>
<sequence length="205" mass="22648">MGDPKLPRRMWRKPKRPFNYDLKMEELRTLGTFGLRTKRELWKAHTELSRVRNQARSLLALGQEVRERKEPVLLRSLARIGLVGKDASLDDVLNLQVNDLLGRRLQTIVMKKLGFSTPYQARQAVVHGHITISDRVVTIPSYTVYVEEEGDIKLTGGSAFATILEKSKRAEAAAREAAAEAAEAEQAAAQAAAPTPAPAAAAPKQ</sequence>